<name>SDHB_ANAPI</name>
<keyword id="KW-0004">4Fe-4S</keyword>
<keyword id="KW-0903">Direct protein sequencing</keyword>
<keyword id="KW-0312">Gluconeogenesis</keyword>
<keyword id="KW-0408">Iron</keyword>
<keyword id="KW-0411">Iron-sulfur</keyword>
<keyword id="KW-0456">Lyase</keyword>
<keyword id="KW-0479">Metal-binding</keyword>
<proteinExistence type="evidence at protein level"/>
<sequence>MLQVFDIIGPIMIGPSESITAGAVRIXKI</sequence>
<evidence type="ECO:0000305" key="1"/>
<organism>
    <name type="scientific">Anaerotignum propionicum</name>
    <name type="common">Clostridium propionicum</name>
    <dbReference type="NCBI Taxonomy" id="28446"/>
    <lineage>
        <taxon>Bacteria</taxon>
        <taxon>Bacillati</taxon>
        <taxon>Bacillota</taxon>
        <taxon>Clostridia</taxon>
        <taxon>Lachnospirales</taxon>
        <taxon>Anaerotignaceae</taxon>
        <taxon>Anaerotignum</taxon>
    </lineage>
</organism>
<comment type="catalytic activity">
    <reaction>
        <text>L-serine = pyruvate + NH4(+)</text>
        <dbReference type="Rhea" id="RHEA:19169"/>
        <dbReference type="ChEBI" id="CHEBI:15361"/>
        <dbReference type="ChEBI" id="CHEBI:28938"/>
        <dbReference type="ChEBI" id="CHEBI:33384"/>
        <dbReference type="EC" id="4.3.1.17"/>
    </reaction>
</comment>
<comment type="cofactor">
    <cofactor>
        <name>[4Fe-4S] cluster</name>
        <dbReference type="ChEBI" id="CHEBI:49883"/>
    </cofactor>
    <text>Binds 1 [4Fe-4S] cluster.</text>
</comment>
<comment type="pathway">
    <text>Carbohydrate biosynthesis; gluconeogenesis.</text>
</comment>
<comment type="subunit">
    <text>Heterodimer of an alpha chain and a beta chain.</text>
</comment>
<comment type="similarity">
    <text evidence="1">Belongs to the iron-sulfur dependent L-serine dehydratase family.</text>
</comment>
<protein>
    <recommendedName>
        <fullName>L-serine dehydratase, beta chain</fullName>
        <shortName>SDH</shortName>
        <ecNumber>4.3.1.17</ecNumber>
    </recommendedName>
    <alternativeName>
        <fullName>L-serine deaminase</fullName>
        <shortName>L-SD</shortName>
    </alternativeName>
</protein>
<accession>P80213</accession>
<reference key="1">
    <citation type="journal article" date="1993" name="Eur. J. Biochem.">
        <title>L-serine and L-threonine dehydratase from Clostridium propionicum. Two enzymes with different prosthetic groups.</title>
        <authorList>
            <person name="Hofmeister A.E.M."/>
            <person name="Grabowski R."/>
            <person name="Linder D."/>
            <person name="Buckel W."/>
        </authorList>
    </citation>
    <scope>PROTEIN SEQUENCE</scope>
    <source>
        <strain>ATCC 25522 / DSM 1682 / JCM 1430 / NCIMB 10656 / VPI 5303 / X2</strain>
    </source>
</reference>
<dbReference type="EC" id="4.3.1.17"/>
<dbReference type="PIR" id="S34762">
    <property type="entry name" value="S34762"/>
</dbReference>
<dbReference type="UniPathway" id="UPA00138"/>
<dbReference type="GO" id="GO:0051539">
    <property type="term" value="F:4 iron, 4 sulfur cluster binding"/>
    <property type="evidence" value="ECO:0007669"/>
    <property type="project" value="UniProtKB-KW"/>
</dbReference>
<dbReference type="GO" id="GO:0003941">
    <property type="term" value="F:L-serine ammonia-lyase activity"/>
    <property type="evidence" value="ECO:0007669"/>
    <property type="project" value="UniProtKB-EC"/>
</dbReference>
<dbReference type="GO" id="GO:0046872">
    <property type="term" value="F:metal ion binding"/>
    <property type="evidence" value="ECO:0007669"/>
    <property type="project" value="UniProtKB-KW"/>
</dbReference>
<dbReference type="GO" id="GO:0006094">
    <property type="term" value="P:gluconeogenesis"/>
    <property type="evidence" value="ECO:0007669"/>
    <property type="project" value="UniProtKB-UniPathway"/>
</dbReference>
<feature type="chain" id="PRO_0000171917" description="L-serine dehydratase, beta chain">
    <location>
        <begin position="1"/>
        <end position="29" status="greater than"/>
    </location>
</feature>
<feature type="non-terminal residue">
    <location>
        <position position="29"/>
    </location>
</feature>